<feature type="chain" id="PRO_1000196725" description="S-adenosylmethionine synthase">
    <location>
        <begin position="1"/>
        <end position="384"/>
    </location>
</feature>
<feature type="region of interest" description="Flexible loop" evidence="1">
    <location>
        <begin position="99"/>
        <end position="109"/>
    </location>
</feature>
<feature type="binding site" description="in other chain" evidence="1">
    <location>
        <position position="15"/>
    </location>
    <ligand>
        <name>ATP</name>
        <dbReference type="ChEBI" id="CHEBI:30616"/>
        <note>ligand shared between two neighboring subunits</note>
    </ligand>
</feature>
<feature type="binding site" evidence="1">
    <location>
        <position position="17"/>
    </location>
    <ligand>
        <name>Mg(2+)</name>
        <dbReference type="ChEBI" id="CHEBI:18420"/>
    </ligand>
</feature>
<feature type="binding site" evidence="1">
    <location>
        <position position="43"/>
    </location>
    <ligand>
        <name>K(+)</name>
        <dbReference type="ChEBI" id="CHEBI:29103"/>
    </ligand>
</feature>
<feature type="binding site" description="in other chain" evidence="1">
    <location>
        <position position="56"/>
    </location>
    <ligand>
        <name>L-methionine</name>
        <dbReference type="ChEBI" id="CHEBI:57844"/>
        <note>ligand shared between two neighboring subunits</note>
    </ligand>
</feature>
<feature type="binding site" description="in other chain" evidence="1">
    <location>
        <position position="99"/>
    </location>
    <ligand>
        <name>L-methionine</name>
        <dbReference type="ChEBI" id="CHEBI:57844"/>
        <note>ligand shared between two neighboring subunits</note>
    </ligand>
</feature>
<feature type="binding site" description="in other chain" evidence="1">
    <location>
        <begin position="164"/>
        <end position="166"/>
    </location>
    <ligand>
        <name>ATP</name>
        <dbReference type="ChEBI" id="CHEBI:30616"/>
        <note>ligand shared between two neighboring subunits</note>
    </ligand>
</feature>
<feature type="binding site" description="in other chain" evidence="1">
    <location>
        <begin position="231"/>
        <end position="232"/>
    </location>
    <ligand>
        <name>ATP</name>
        <dbReference type="ChEBI" id="CHEBI:30616"/>
        <note>ligand shared between two neighboring subunits</note>
    </ligand>
</feature>
<feature type="binding site" evidence="1">
    <location>
        <position position="240"/>
    </location>
    <ligand>
        <name>ATP</name>
        <dbReference type="ChEBI" id="CHEBI:30616"/>
        <note>ligand shared between two neighboring subunits</note>
    </ligand>
</feature>
<feature type="binding site" evidence="1">
    <location>
        <position position="240"/>
    </location>
    <ligand>
        <name>L-methionine</name>
        <dbReference type="ChEBI" id="CHEBI:57844"/>
        <note>ligand shared between two neighboring subunits</note>
    </ligand>
</feature>
<feature type="binding site" description="in other chain" evidence="1">
    <location>
        <begin position="246"/>
        <end position="247"/>
    </location>
    <ligand>
        <name>ATP</name>
        <dbReference type="ChEBI" id="CHEBI:30616"/>
        <note>ligand shared between two neighboring subunits</note>
    </ligand>
</feature>
<feature type="binding site" evidence="1">
    <location>
        <position position="263"/>
    </location>
    <ligand>
        <name>ATP</name>
        <dbReference type="ChEBI" id="CHEBI:30616"/>
        <note>ligand shared between two neighboring subunits</note>
    </ligand>
</feature>
<feature type="binding site" evidence="1">
    <location>
        <position position="267"/>
    </location>
    <ligand>
        <name>ATP</name>
        <dbReference type="ChEBI" id="CHEBI:30616"/>
        <note>ligand shared between two neighboring subunits</note>
    </ligand>
</feature>
<feature type="binding site" description="in other chain" evidence="1">
    <location>
        <position position="271"/>
    </location>
    <ligand>
        <name>L-methionine</name>
        <dbReference type="ChEBI" id="CHEBI:57844"/>
        <note>ligand shared between two neighboring subunits</note>
    </ligand>
</feature>
<gene>
    <name evidence="1" type="primary">metK</name>
    <name type="ordered locus">swp_4245</name>
</gene>
<evidence type="ECO:0000255" key="1">
    <source>
        <dbReference type="HAMAP-Rule" id="MF_00086"/>
    </source>
</evidence>
<comment type="function">
    <text evidence="1">Catalyzes the formation of S-adenosylmethionine (AdoMet) from methionine and ATP. The overall synthetic reaction is composed of two sequential steps, AdoMet formation and the subsequent tripolyphosphate hydrolysis which occurs prior to release of AdoMet from the enzyme.</text>
</comment>
<comment type="catalytic activity">
    <reaction evidence="1">
        <text>L-methionine + ATP + H2O = S-adenosyl-L-methionine + phosphate + diphosphate</text>
        <dbReference type="Rhea" id="RHEA:21080"/>
        <dbReference type="ChEBI" id="CHEBI:15377"/>
        <dbReference type="ChEBI" id="CHEBI:30616"/>
        <dbReference type="ChEBI" id="CHEBI:33019"/>
        <dbReference type="ChEBI" id="CHEBI:43474"/>
        <dbReference type="ChEBI" id="CHEBI:57844"/>
        <dbReference type="ChEBI" id="CHEBI:59789"/>
        <dbReference type="EC" id="2.5.1.6"/>
    </reaction>
</comment>
<comment type="cofactor">
    <cofactor evidence="1">
        <name>Mg(2+)</name>
        <dbReference type="ChEBI" id="CHEBI:18420"/>
    </cofactor>
    <text evidence="1">Binds 2 divalent ions per subunit.</text>
</comment>
<comment type="cofactor">
    <cofactor evidence="1">
        <name>K(+)</name>
        <dbReference type="ChEBI" id="CHEBI:29103"/>
    </cofactor>
    <text evidence="1">Binds 1 potassium ion per subunit.</text>
</comment>
<comment type="pathway">
    <text evidence="1">Amino-acid biosynthesis; S-adenosyl-L-methionine biosynthesis; S-adenosyl-L-methionine from L-methionine: step 1/1.</text>
</comment>
<comment type="subunit">
    <text evidence="1">Homotetramer; dimer of dimers.</text>
</comment>
<comment type="subcellular location">
    <subcellularLocation>
        <location evidence="1">Cytoplasm</location>
    </subcellularLocation>
</comment>
<comment type="similarity">
    <text evidence="1">Belongs to the AdoMet synthase family.</text>
</comment>
<reference key="1">
    <citation type="journal article" date="2008" name="PLoS ONE">
        <title>Environmental adaptation: genomic analysis of the piezotolerant and psychrotolerant deep-sea iron reducing bacterium Shewanella piezotolerans WP3.</title>
        <authorList>
            <person name="Wang F."/>
            <person name="Wang J."/>
            <person name="Jian H."/>
            <person name="Zhang B."/>
            <person name="Li S."/>
            <person name="Wang F."/>
            <person name="Zeng X."/>
            <person name="Gao L."/>
            <person name="Bartlett D.H."/>
            <person name="Yu J."/>
            <person name="Hu S."/>
            <person name="Xiao X."/>
        </authorList>
    </citation>
    <scope>NUCLEOTIDE SEQUENCE [LARGE SCALE GENOMIC DNA]</scope>
    <source>
        <strain>WP3 / JCM 13877</strain>
    </source>
</reference>
<proteinExistence type="inferred from homology"/>
<keyword id="KW-0067">ATP-binding</keyword>
<keyword id="KW-0963">Cytoplasm</keyword>
<keyword id="KW-0460">Magnesium</keyword>
<keyword id="KW-0479">Metal-binding</keyword>
<keyword id="KW-0547">Nucleotide-binding</keyword>
<keyword id="KW-0554">One-carbon metabolism</keyword>
<keyword id="KW-0630">Potassium</keyword>
<keyword id="KW-0808">Transferase</keyword>
<name>METK_SHEPW</name>
<organism>
    <name type="scientific">Shewanella piezotolerans (strain WP3 / JCM 13877)</name>
    <dbReference type="NCBI Taxonomy" id="225849"/>
    <lineage>
        <taxon>Bacteria</taxon>
        <taxon>Pseudomonadati</taxon>
        <taxon>Pseudomonadota</taxon>
        <taxon>Gammaproteobacteria</taxon>
        <taxon>Alteromonadales</taxon>
        <taxon>Shewanellaceae</taxon>
        <taxon>Shewanella</taxon>
    </lineage>
</organism>
<protein>
    <recommendedName>
        <fullName evidence="1">S-adenosylmethionine synthase</fullName>
        <shortName evidence="1">AdoMet synthase</shortName>
        <ecNumber evidence="1">2.5.1.6</ecNumber>
    </recommendedName>
    <alternativeName>
        <fullName evidence="1">MAT</fullName>
    </alternativeName>
    <alternativeName>
        <fullName evidence="1">Methionine adenosyltransferase</fullName>
    </alternativeName>
</protein>
<sequence>MAKHLFTSESVSEGHPDKIADQISDAVLDAILEQDPKARVACETYVKTGMVMVGGEVTTSAWVDIEEITRKTVREIGYTHSDMGFDADSCAILNAIGKQSPDINQGVDRADPKEQGAGDQGLMFGYANNETDVLMPAPITYSHKLVKRQSEVRKDKTLPWLRPDAKSQVTFAYNNDGSIAGIDAVVLSTQHREDVSQADLIEGVMETIIKPVLPAKWLSKDTKYFINPTGRFVIGGPVGDCGLTGRKIIVDTYGGMARHGGGAFSGKDPSKVDRSAAYAARYVAKNIVAAGLADRCEIQVSYAIGVAEPTSISIETFGTAKVAEELLIDLVRRHFDLRPYGLTEMLNLARPIYQATAAYGHFGRNEFPWEATDKAEALRADAGL</sequence>
<accession>B8CU43</accession>
<dbReference type="EC" id="2.5.1.6" evidence="1"/>
<dbReference type="EMBL" id="CP000472">
    <property type="protein sequence ID" value="ACJ30899.1"/>
    <property type="molecule type" value="Genomic_DNA"/>
</dbReference>
<dbReference type="RefSeq" id="WP_020914236.1">
    <property type="nucleotide sequence ID" value="NC_011566.1"/>
</dbReference>
<dbReference type="SMR" id="B8CU43"/>
<dbReference type="STRING" id="225849.swp_4245"/>
<dbReference type="KEGG" id="swp:swp_4245"/>
<dbReference type="eggNOG" id="COG0192">
    <property type="taxonomic scope" value="Bacteria"/>
</dbReference>
<dbReference type="HOGENOM" id="CLU_041802_1_1_6"/>
<dbReference type="OrthoDB" id="9801686at2"/>
<dbReference type="UniPathway" id="UPA00315">
    <property type="reaction ID" value="UER00080"/>
</dbReference>
<dbReference type="Proteomes" id="UP000000753">
    <property type="component" value="Chromosome"/>
</dbReference>
<dbReference type="GO" id="GO:0005737">
    <property type="term" value="C:cytoplasm"/>
    <property type="evidence" value="ECO:0007669"/>
    <property type="project" value="UniProtKB-SubCell"/>
</dbReference>
<dbReference type="GO" id="GO:0005524">
    <property type="term" value="F:ATP binding"/>
    <property type="evidence" value="ECO:0007669"/>
    <property type="project" value="UniProtKB-UniRule"/>
</dbReference>
<dbReference type="GO" id="GO:0000287">
    <property type="term" value="F:magnesium ion binding"/>
    <property type="evidence" value="ECO:0007669"/>
    <property type="project" value="UniProtKB-UniRule"/>
</dbReference>
<dbReference type="GO" id="GO:0004478">
    <property type="term" value="F:methionine adenosyltransferase activity"/>
    <property type="evidence" value="ECO:0007669"/>
    <property type="project" value="UniProtKB-UniRule"/>
</dbReference>
<dbReference type="GO" id="GO:0006730">
    <property type="term" value="P:one-carbon metabolic process"/>
    <property type="evidence" value="ECO:0007669"/>
    <property type="project" value="UniProtKB-KW"/>
</dbReference>
<dbReference type="GO" id="GO:0006556">
    <property type="term" value="P:S-adenosylmethionine biosynthetic process"/>
    <property type="evidence" value="ECO:0007669"/>
    <property type="project" value="UniProtKB-UniRule"/>
</dbReference>
<dbReference type="CDD" id="cd18079">
    <property type="entry name" value="S-AdoMet_synt"/>
    <property type="match status" value="1"/>
</dbReference>
<dbReference type="FunFam" id="3.30.300.10:FF:000001">
    <property type="entry name" value="S-adenosylmethionine synthase"/>
    <property type="match status" value="1"/>
</dbReference>
<dbReference type="FunFam" id="3.30.300.10:FF:000003">
    <property type="entry name" value="S-adenosylmethionine synthase"/>
    <property type="match status" value="1"/>
</dbReference>
<dbReference type="FunFam" id="3.30.300.10:FF:000004">
    <property type="entry name" value="S-adenosylmethionine synthase"/>
    <property type="match status" value="1"/>
</dbReference>
<dbReference type="Gene3D" id="3.30.300.10">
    <property type="match status" value="3"/>
</dbReference>
<dbReference type="HAMAP" id="MF_00086">
    <property type="entry name" value="S_AdoMet_synth1"/>
    <property type="match status" value="1"/>
</dbReference>
<dbReference type="InterPro" id="IPR022631">
    <property type="entry name" value="ADOMET_SYNTHASE_CS"/>
</dbReference>
<dbReference type="InterPro" id="IPR022630">
    <property type="entry name" value="S-AdoMet_synt_C"/>
</dbReference>
<dbReference type="InterPro" id="IPR022629">
    <property type="entry name" value="S-AdoMet_synt_central"/>
</dbReference>
<dbReference type="InterPro" id="IPR022628">
    <property type="entry name" value="S-AdoMet_synt_N"/>
</dbReference>
<dbReference type="InterPro" id="IPR002133">
    <property type="entry name" value="S-AdoMet_synthetase"/>
</dbReference>
<dbReference type="InterPro" id="IPR022636">
    <property type="entry name" value="S-AdoMet_synthetase_sfam"/>
</dbReference>
<dbReference type="NCBIfam" id="TIGR01034">
    <property type="entry name" value="metK"/>
    <property type="match status" value="1"/>
</dbReference>
<dbReference type="PANTHER" id="PTHR11964">
    <property type="entry name" value="S-ADENOSYLMETHIONINE SYNTHETASE"/>
    <property type="match status" value="1"/>
</dbReference>
<dbReference type="Pfam" id="PF02773">
    <property type="entry name" value="S-AdoMet_synt_C"/>
    <property type="match status" value="1"/>
</dbReference>
<dbReference type="Pfam" id="PF02772">
    <property type="entry name" value="S-AdoMet_synt_M"/>
    <property type="match status" value="1"/>
</dbReference>
<dbReference type="Pfam" id="PF00438">
    <property type="entry name" value="S-AdoMet_synt_N"/>
    <property type="match status" value="1"/>
</dbReference>
<dbReference type="PIRSF" id="PIRSF000497">
    <property type="entry name" value="MAT"/>
    <property type="match status" value="1"/>
</dbReference>
<dbReference type="SUPFAM" id="SSF55973">
    <property type="entry name" value="S-adenosylmethionine synthetase"/>
    <property type="match status" value="3"/>
</dbReference>
<dbReference type="PROSITE" id="PS00376">
    <property type="entry name" value="ADOMET_SYNTHASE_1"/>
    <property type="match status" value="1"/>
</dbReference>
<dbReference type="PROSITE" id="PS00377">
    <property type="entry name" value="ADOMET_SYNTHASE_2"/>
    <property type="match status" value="1"/>
</dbReference>